<sequence length="107" mass="12004">MIIVTNTAKITKGNGHKLIDRFNKVGQVETMPGFLGLEVLLTQNTVDYDEVTISTRWNAKEDFQGWTKSPAFKAAHSHQGGMPDYILDNKISYYDVKVVRMPMAAAQ</sequence>
<proteinExistence type="inferred from homology"/>
<accession>C1ETY1</accession>
<keyword id="KW-0963">Cytoplasm</keyword>
<keyword id="KW-0349">Heme</keyword>
<keyword id="KW-0408">Iron</keyword>
<keyword id="KW-0479">Metal-binding</keyword>
<keyword id="KW-0503">Monooxygenase</keyword>
<keyword id="KW-0560">Oxidoreductase</keyword>
<comment type="function">
    <text evidence="1">Allows bacterial pathogens to use the host heme as an iron source. Catalyzes the oxidative degradation of the heme macrocyclic porphyrin ring to the biliverdin in the presence of a suitable electron donor such as ascorbate or NADPH--cytochrome P450 reductase, with subsequent release of free iron.</text>
</comment>
<comment type="catalytic activity">
    <reaction evidence="1">
        <text>heme b + 3 reduced [NADPH--hemoprotein reductase] + 3 O2 = biliverdin IXalpha + CO + Fe(2+) + 3 oxidized [NADPH--hemoprotein reductase] + 3 H2O + H(+)</text>
        <dbReference type="Rhea" id="RHEA:21764"/>
        <dbReference type="Rhea" id="RHEA-COMP:11964"/>
        <dbReference type="Rhea" id="RHEA-COMP:11965"/>
        <dbReference type="ChEBI" id="CHEBI:15377"/>
        <dbReference type="ChEBI" id="CHEBI:15378"/>
        <dbReference type="ChEBI" id="CHEBI:15379"/>
        <dbReference type="ChEBI" id="CHEBI:17245"/>
        <dbReference type="ChEBI" id="CHEBI:29033"/>
        <dbReference type="ChEBI" id="CHEBI:57618"/>
        <dbReference type="ChEBI" id="CHEBI:57991"/>
        <dbReference type="ChEBI" id="CHEBI:58210"/>
        <dbReference type="ChEBI" id="CHEBI:60344"/>
        <dbReference type="EC" id="1.14.14.18"/>
    </reaction>
</comment>
<comment type="subunit">
    <text evidence="1">Homodimer.</text>
</comment>
<comment type="subcellular location">
    <subcellularLocation>
        <location evidence="1">Cytoplasm</location>
    </subcellularLocation>
</comment>
<comment type="similarity">
    <text evidence="1">Belongs to the antibiotic biosynthesis monooxygenase family. Heme-degrading monooxygenase IsdG subfamily.</text>
</comment>
<organism>
    <name type="scientific">Bacillus cereus (strain 03BB102)</name>
    <dbReference type="NCBI Taxonomy" id="572264"/>
    <lineage>
        <taxon>Bacteria</taxon>
        <taxon>Bacillati</taxon>
        <taxon>Bacillota</taxon>
        <taxon>Bacilli</taxon>
        <taxon>Bacillales</taxon>
        <taxon>Bacillaceae</taxon>
        <taxon>Bacillus</taxon>
        <taxon>Bacillus cereus group</taxon>
    </lineage>
</organism>
<protein>
    <recommendedName>
        <fullName evidence="1">Heme-degrading monooxygenase</fullName>
        <ecNumber evidence="1">1.14.14.18</ecNumber>
    </recommendedName>
    <alternativeName>
        <fullName evidence="1">Heme oxygenase</fullName>
    </alternativeName>
    <alternativeName>
        <fullName evidence="1">Iron-regulated surface determinant</fullName>
    </alternativeName>
    <alternativeName>
        <fullName evidence="1">Iron-responsive surface determinant</fullName>
    </alternativeName>
</protein>
<reference key="1">
    <citation type="submission" date="2009-02" db="EMBL/GenBank/DDBJ databases">
        <title>Genome sequence of Bacillus cereus 03BB102.</title>
        <authorList>
            <person name="Dodson R.J."/>
            <person name="Jackson P."/>
            <person name="Munk A.C."/>
            <person name="Brettin T."/>
            <person name="Bruce D."/>
            <person name="Detter C."/>
            <person name="Tapia R."/>
            <person name="Han C."/>
            <person name="Sutton G."/>
            <person name="Sims D."/>
        </authorList>
    </citation>
    <scope>NUCLEOTIDE SEQUENCE [LARGE SCALE GENOMIC DNA]</scope>
    <source>
        <strain>03BB102</strain>
    </source>
</reference>
<feature type="chain" id="PRO_1000165179" description="Heme-degrading monooxygenase">
    <location>
        <begin position="1"/>
        <end position="107"/>
    </location>
</feature>
<feature type="domain" description="ABM" evidence="1">
    <location>
        <begin position="2"/>
        <end position="94"/>
    </location>
</feature>
<feature type="binding site" evidence="1">
    <location>
        <position position="6"/>
    </location>
    <ligand>
        <name>Fe cation</name>
        <dbReference type="ChEBI" id="CHEBI:24875"/>
    </ligand>
</feature>
<feature type="binding site" description="axial binding residue" evidence="1">
    <location>
        <position position="76"/>
    </location>
    <ligand>
        <name>heme</name>
        <dbReference type="ChEBI" id="CHEBI:30413"/>
    </ligand>
    <ligandPart>
        <name>Fe</name>
        <dbReference type="ChEBI" id="CHEBI:18248"/>
    </ligandPart>
</feature>
<feature type="site" description="Transition state stabilizer" evidence="1">
    <location>
        <position position="66"/>
    </location>
</feature>
<dbReference type="EC" id="1.14.14.18" evidence="1"/>
<dbReference type="EMBL" id="CP001407">
    <property type="protein sequence ID" value="ACO26877.1"/>
    <property type="molecule type" value="Genomic_DNA"/>
</dbReference>
<dbReference type="RefSeq" id="WP_000587815.1">
    <property type="nucleotide sequence ID" value="NZ_CP009318.1"/>
</dbReference>
<dbReference type="SMR" id="C1ETY1"/>
<dbReference type="GeneID" id="92798870"/>
<dbReference type="KEGG" id="bcx:BCA_4648"/>
<dbReference type="PATRIC" id="fig|572264.18.peg.4596"/>
<dbReference type="Proteomes" id="UP000002210">
    <property type="component" value="Chromosome"/>
</dbReference>
<dbReference type="GO" id="GO:0005737">
    <property type="term" value="C:cytoplasm"/>
    <property type="evidence" value="ECO:0007669"/>
    <property type="project" value="UniProtKB-SubCell"/>
</dbReference>
<dbReference type="GO" id="GO:0020037">
    <property type="term" value="F:heme binding"/>
    <property type="evidence" value="ECO:0007669"/>
    <property type="project" value="UniProtKB-UniRule"/>
</dbReference>
<dbReference type="GO" id="GO:0004392">
    <property type="term" value="F:heme oxygenase (decyclizing) activity"/>
    <property type="evidence" value="ECO:0007669"/>
    <property type="project" value="UniProtKB-UniRule"/>
</dbReference>
<dbReference type="GO" id="GO:0005506">
    <property type="term" value="F:iron ion binding"/>
    <property type="evidence" value="ECO:0007669"/>
    <property type="project" value="UniProtKB-UniRule"/>
</dbReference>
<dbReference type="GO" id="GO:0042167">
    <property type="term" value="P:heme catabolic process"/>
    <property type="evidence" value="ECO:0007669"/>
    <property type="project" value="UniProtKB-UniRule"/>
</dbReference>
<dbReference type="GO" id="GO:0033212">
    <property type="term" value="P:iron import into cell"/>
    <property type="evidence" value="ECO:0007669"/>
    <property type="project" value="InterPro"/>
</dbReference>
<dbReference type="Gene3D" id="3.30.70.100">
    <property type="match status" value="1"/>
</dbReference>
<dbReference type="HAMAP" id="MF_01272">
    <property type="entry name" value="Heme_degrading_monooxygenase"/>
    <property type="match status" value="1"/>
</dbReference>
<dbReference type="InterPro" id="IPR007138">
    <property type="entry name" value="ABM_dom"/>
</dbReference>
<dbReference type="InterPro" id="IPR011008">
    <property type="entry name" value="Dimeric_a/b-barrel"/>
</dbReference>
<dbReference type="InterPro" id="IPR050404">
    <property type="entry name" value="Heme-degrading_MO"/>
</dbReference>
<dbReference type="InterPro" id="IPR023953">
    <property type="entry name" value="IsdG"/>
</dbReference>
<dbReference type="NCBIfam" id="NF009839">
    <property type="entry name" value="PRK13314.1"/>
    <property type="match status" value="1"/>
</dbReference>
<dbReference type="PANTHER" id="PTHR34474:SF4">
    <property type="entry name" value="HEME OXYGENASE (STAPHYLOBILIN-PRODUCING) 1"/>
    <property type="match status" value="1"/>
</dbReference>
<dbReference type="PANTHER" id="PTHR34474">
    <property type="entry name" value="SIGNAL TRANSDUCTION PROTEIN TRAP"/>
    <property type="match status" value="1"/>
</dbReference>
<dbReference type="Pfam" id="PF03992">
    <property type="entry name" value="ABM"/>
    <property type="match status" value="1"/>
</dbReference>
<dbReference type="SUPFAM" id="SSF54909">
    <property type="entry name" value="Dimeric alpha+beta barrel"/>
    <property type="match status" value="1"/>
</dbReference>
<dbReference type="PROSITE" id="PS51725">
    <property type="entry name" value="ABM"/>
    <property type="match status" value="1"/>
</dbReference>
<evidence type="ECO:0000255" key="1">
    <source>
        <dbReference type="HAMAP-Rule" id="MF_01272"/>
    </source>
</evidence>
<gene>
    <name evidence="1" type="primary">isdG</name>
    <name type="ordered locus">BCA_4648</name>
</gene>
<name>HDOX_BACC3</name>